<proteinExistence type="inferred from homology"/>
<protein>
    <recommendedName>
        <fullName evidence="1">Adenylosuccinate synthetase</fullName>
        <shortName evidence="1">AMPSase</shortName>
        <shortName evidence="1">AdSS</shortName>
        <ecNumber evidence="1">6.3.4.4</ecNumber>
    </recommendedName>
    <alternativeName>
        <fullName evidence="1">IMP--aspartate ligase</fullName>
    </alternativeName>
</protein>
<organism>
    <name type="scientific">Mycobacteroides abscessus (strain ATCC 19977 / DSM 44196 / CCUG 20993 / CIP 104536 / JCM 13569 / NCTC 13031 / TMC 1543 / L948)</name>
    <name type="common">Mycobacterium abscessus</name>
    <dbReference type="NCBI Taxonomy" id="561007"/>
    <lineage>
        <taxon>Bacteria</taxon>
        <taxon>Bacillati</taxon>
        <taxon>Actinomycetota</taxon>
        <taxon>Actinomycetes</taxon>
        <taxon>Mycobacteriales</taxon>
        <taxon>Mycobacteriaceae</taxon>
        <taxon>Mycobacteroides</taxon>
        <taxon>Mycobacteroides abscessus</taxon>
    </lineage>
</organism>
<evidence type="ECO:0000255" key="1">
    <source>
        <dbReference type="HAMAP-Rule" id="MF_00011"/>
    </source>
</evidence>
<keyword id="KW-0963">Cytoplasm</keyword>
<keyword id="KW-0342">GTP-binding</keyword>
<keyword id="KW-0436">Ligase</keyword>
<keyword id="KW-0460">Magnesium</keyword>
<keyword id="KW-0479">Metal-binding</keyword>
<keyword id="KW-0547">Nucleotide-binding</keyword>
<keyword id="KW-0658">Purine biosynthesis</keyword>
<keyword id="KW-1185">Reference proteome</keyword>
<dbReference type="EC" id="6.3.4.4" evidence="1"/>
<dbReference type="EMBL" id="CU458896">
    <property type="protein sequence ID" value="CAM64322.1"/>
    <property type="molecule type" value="Genomic_DNA"/>
</dbReference>
<dbReference type="RefSeq" id="WP_005085742.1">
    <property type="nucleotide sequence ID" value="NZ_MLCG01000001.1"/>
</dbReference>
<dbReference type="SMR" id="B1MIV1"/>
<dbReference type="GeneID" id="93381195"/>
<dbReference type="KEGG" id="mab:MAB_4249c"/>
<dbReference type="UniPathway" id="UPA00075">
    <property type="reaction ID" value="UER00335"/>
</dbReference>
<dbReference type="Proteomes" id="UP000007137">
    <property type="component" value="Chromosome"/>
</dbReference>
<dbReference type="GO" id="GO:0005737">
    <property type="term" value="C:cytoplasm"/>
    <property type="evidence" value="ECO:0007669"/>
    <property type="project" value="UniProtKB-SubCell"/>
</dbReference>
<dbReference type="GO" id="GO:0004019">
    <property type="term" value="F:adenylosuccinate synthase activity"/>
    <property type="evidence" value="ECO:0007669"/>
    <property type="project" value="UniProtKB-UniRule"/>
</dbReference>
<dbReference type="GO" id="GO:0005525">
    <property type="term" value="F:GTP binding"/>
    <property type="evidence" value="ECO:0007669"/>
    <property type="project" value="UniProtKB-UniRule"/>
</dbReference>
<dbReference type="GO" id="GO:0000287">
    <property type="term" value="F:magnesium ion binding"/>
    <property type="evidence" value="ECO:0007669"/>
    <property type="project" value="UniProtKB-UniRule"/>
</dbReference>
<dbReference type="GO" id="GO:0044208">
    <property type="term" value="P:'de novo' AMP biosynthetic process"/>
    <property type="evidence" value="ECO:0007669"/>
    <property type="project" value="UniProtKB-UniRule"/>
</dbReference>
<dbReference type="GO" id="GO:0046040">
    <property type="term" value="P:IMP metabolic process"/>
    <property type="evidence" value="ECO:0007669"/>
    <property type="project" value="TreeGrafter"/>
</dbReference>
<dbReference type="CDD" id="cd03108">
    <property type="entry name" value="AdSS"/>
    <property type="match status" value="1"/>
</dbReference>
<dbReference type="FunFam" id="1.10.300.10:FF:000001">
    <property type="entry name" value="Adenylosuccinate synthetase"/>
    <property type="match status" value="1"/>
</dbReference>
<dbReference type="FunFam" id="3.90.170.10:FF:000001">
    <property type="entry name" value="Adenylosuccinate synthetase"/>
    <property type="match status" value="1"/>
</dbReference>
<dbReference type="Gene3D" id="3.40.440.10">
    <property type="entry name" value="Adenylosuccinate Synthetase, subunit A, domain 1"/>
    <property type="match status" value="1"/>
</dbReference>
<dbReference type="Gene3D" id="1.10.300.10">
    <property type="entry name" value="Adenylosuccinate Synthetase, subunit A, domain 2"/>
    <property type="match status" value="1"/>
</dbReference>
<dbReference type="Gene3D" id="3.90.170.10">
    <property type="entry name" value="Adenylosuccinate Synthetase, subunit A, domain 3"/>
    <property type="match status" value="1"/>
</dbReference>
<dbReference type="HAMAP" id="MF_00011">
    <property type="entry name" value="Adenylosucc_synth"/>
    <property type="match status" value="1"/>
</dbReference>
<dbReference type="InterPro" id="IPR018220">
    <property type="entry name" value="Adenylosuccin_syn_GTP-bd"/>
</dbReference>
<dbReference type="InterPro" id="IPR033128">
    <property type="entry name" value="Adenylosuccin_syn_Lys_AS"/>
</dbReference>
<dbReference type="InterPro" id="IPR042109">
    <property type="entry name" value="Adenylosuccinate_synth_dom1"/>
</dbReference>
<dbReference type="InterPro" id="IPR042110">
    <property type="entry name" value="Adenylosuccinate_synth_dom2"/>
</dbReference>
<dbReference type="InterPro" id="IPR042111">
    <property type="entry name" value="Adenylosuccinate_synth_dom3"/>
</dbReference>
<dbReference type="InterPro" id="IPR001114">
    <property type="entry name" value="Adenylosuccinate_synthetase"/>
</dbReference>
<dbReference type="InterPro" id="IPR027417">
    <property type="entry name" value="P-loop_NTPase"/>
</dbReference>
<dbReference type="NCBIfam" id="NF002223">
    <property type="entry name" value="PRK01117.1"/>
    <property type="match status" value="1"/>
</dbReference>
<dbReference type="NCBIfam" id="TIGR00184">
    <property type="entry name" value="purA"/>
    <property type="match status" value="1"/>
</dbReference>
<dbReference type="PANTHER" id="PTHR11846">
    <property type="entry name" value="ADENYLOSUCCINATE SYNTHETASE"/>
    <property type="match status" value="1"/>
</dbReference>
<dbReference type="PANTHER" id="PTHR11846:SF0">
    <property type="entry name" value="ADENYLOSUCCINATE SYNTHETASE"/>
    <property type="match status" value="1"/>
</dbReference>
<dbReference type="Pfam" id="PF00709">
    <property type="entry name" value="Adenylsucc_synt"/>
    <property type="match status" value="1"/>
</dbReference>
<dbReference type="SMART" id="SM00788">
    <property type="entry name" value="Adenylsucc_synt"/>
    <property type="match status" value="1"/>
</dbReference>
<dbReference type="SUPFAM" id="SSF52540">
    <property type="entry name" value="P-loop containing nucleoside triphosphate hydrolases"/>
    <property type="match status" value="1"/>
</dbReference>
<dbReference type="PROSITE" id="PS01266">
    <property type="entry name" value="ADENYLOSUCCIN_SYN_1"/>
    <property type="match status" value="1"/>
</dbReference>
<dbReference type="PROSITE" id="PS00513">
    <property type="entry name" value="ADENYLOSUCCIN_SYN_2"/>
    <property type="match status" value="1"/>
</dbReference>
<reference key="1">
    <citation type="journal article" date="2009" name="PLoS ONE">
        <title>Non mycobacterial virulence genes in the genome of the emerging pathogen Mycobacterium abscessus.</title>
        <authorList>
            <person name="Ripoll F."/>
            <person name="Pasek S."/>
            <person name="Schenowitz C."/>
            <person name="Dossat C."/>
            <person name="Barbe V."/>
            <person name="Rottman M."/>
            <person name="Macheras E."/>
            <person name="Heym B."/>
            <person name="Herrmann J.L."/>
            <person name="Daffe M."/>
            <person name="Brosch R."/>
            <person name="Risler J.L."/>
            <person name="Gaillard J.L."/>
        </authorList>
    </citation>
    <scope>NUCLEOTIDE SEQUENCE [LARGE SCALE GENOMIC DNA]</scope>
    <source>
        <strain>ATCC 19977 / DSM 44196 / CCUG 20993 / CIP 104536 / JCM 13569 / NCTC 13031 / TMC 1543 / L948</strain>
    </source>
</reference>
<gene>
    <name evidence="1" type="primary">purA</name>
    <name type="ordered locus">MAB_4249c</name>
</gene>
<name>PURA_MYCA9</name>
<comment type="function">
    <text evidence="1">Plays an important role in the de novo pathway of purine nucleotide biosynthesis. Catalyzes the first committed step in the biosynthesis of AMP from IMP.</text>
</comment>
<comment type="catalytic activity">
    <reaction evidence="1">
        <text>IMP + L-aspartate + GTP = N(6)-(1,2-dicarboxyethyl)-AMP + GDP + phosphate + 2 H(+)</text>
        <dbReference type="Rhea" id="RHEA:15753"/>
        <dbReference type="ChEBI" id="CHEBI:15378"/>
        <dbReference type="ChEBI" id="CHEBI:29991"/>
        <dbReference type="ChEBI" id="CHEBI:37565"/>
        <dbReference type="ChEBI" id="CHEBI:43474"/>
        <dbReference type="ChEBI" id="CHEBI:57567"/>
        <dbReference type="ChEBI" id="CHEBI:58053"/>
        <dbReference type="ChEBI" id="CHEBI:58189"/>
        <dbReference type="EC" id="6.3.4.4"/>
    </reaction>
</comment>
<comment type="cofactor">
    <cofactor evidence="1">
        <name>Mg(2+)</name>
        <dbReference type="ChEBI" id="CHEBI:18420"/>
    </cofactor>
    <text evidence="1">Binds 1 Mg(2+) ion per subunit.</text>
</comment>
<comment type="pathway">
    <text evidence="1">Purine metabolism; AMP biosynthesis via de novo pathway; AMP from IMP: step 1/2.</text>
</comment>
<comment type="subunit">
    <text evidence="1">Homodimer.</text>
</comment>
<comment type="subcellular location">
    <subcellularLocation>
        <location evidence="1">Cytoplasm</location>
    </subcellularLocation>
</comment>
<comment type="similarity">
    <text evidence="1">Belongs to the adenylosuccinate synthetase family.</text>
</comment>
<sequence length="431" mass="46349">MPAIVLIGAQWGDEGKGKATDLLGGSVQWVVRYQGGNNAGHTVVLPNGENFALHLIPSGILTPGVTNVIGNGVVVDPGVLLTELAGLEERGIDTSGLILSADAHLLMPYHVAIDKVTERYLGSKKIGTTGRGIGPCYQDKVARIGIRVADVLDEESLRQKVHAALEFKNQVLVKIYNRKALDPDQVVDGVLEQAEGFKHRIADARLQLNQALERGETVLLEGSQGTLLDVDHGTYPFVTSSNPTAGGASVGSGIGPTRITTVLGILKAYTTRVGSGPFPTELFDEHGAYLAKTGGEVGVTTGRARRCGWFDAVIARYATRVNGITDYFLTKLDVLSSLQTVPICVGYEVDGKRTNEMPMTQSEIYRATPVYEELPGWWEDISGARQFEDLPAKAQDYVLRLEELAGAPMSCIGVGPGRDQTIVRRDILSRS</sequence>
<feature type="chain" id="PRO_1000089316" description="Adenylosuccinate synthetase">
    <location>
        <begin position="1"/>
        <end position="431"/>
    </location>
</feature>
<feature type="active site" description="Proton acceptor" evidence="1">
    <location>
        <position position="13"/>
    </location>
</feature>
<feature type="active site" description="Proton donor" evidence="1">
    <location>
        <position position="41"/>
    </location>
</feature>
<feature type="binding site" evidence="1">
    <location>
        <begin position="12"/>
        <end position="18"/>
    </location>
    <ligand>
        <name>GTP</name>
        <dbReference type="ChEBI" id="CHEBI:37565"/>
    </ligand>
</feature>
<feature type="binding site" description="in other chain" evidence="1">
    <location>
        <begin position="13"/>
        <end position="16"/>
    </location>
    <ligand>
        <name>IMP</name>
        <dbReference type="ChEBI" id="CHEBI:58053"/>
        <note>ligand shared between dimeric partners</note>
    </ligand>
</feature>
<feature type="binding site" evidence="1">
    <location>
        <position position="13"/>
    </location>
    <ligand>
        <name>Mg(2+)</name>
        <dbReference type="ChEBI" id="CHEBI:18420"/>
    </ligand>
</feature>
<feature type="binding site" description="in other chain" evidence="1">
    <location>
        <begin position="38"/>
        <end position="41"/>
    </location>
    <ligand>
        <name>IMP</name>
        <dbReference type="ChEBI" id="CHEBI:58053"/>
        <note>ligand shared between dimeric partners</note>
    </ligand>
</feature>
<feature type="binding site" evidence="1">
    <location>
        <begin position="40"/>
        <end position="42"/>
    </location>
    <ligand>
        <name>GTP</name>
        <dbReference type="ChEBI" id="CHEBI:37565"/>
    </ligand>
</feature>
<feature type="binding site" evidence="1">
    <location>
        <position position="40"/>
    </location>
    <ligand>
        <name>Mg(2+)</name>
        <dbReference type="ChEBI" id="CHEBI:18420"/>
    </ligand>
</feature>
<feature type="binding site" description="in other chain" evidence="1">
    <location>
        <position position="129"/>
    </location>
    <ligand>
        <name>IMP</name>
        <dbReference type="ChEBI" id="CHEBI:58053"/>
        <note>ligand shared between dimeric partners</note>
    </ligand>
</feature>
<feature type="binding site" evidence="1">
    <location>
        <position position="143"/>
    </location>
    <ligand>
        <name>IMP</name>
        <dbReference type="ChEBI" id="CHEBI:58053"/>
        <note>ligand shared between dimeric partners</note>
    </ligand>
</feature>
<feature type="binding site" description="in other chain" evidence="1">
    <location>
        <position position="224"/>
    </location>
    <ligand>
        <name>IMP</name>
        <dbReference type="ChEBI" id="CHEBI:58053"/>
        <note>ligand shared between dimeric partners</note>
    </ligand>
</feature>
<feature type="binding site" description="in other chain" evidence="1">
    <location>
        <position position="239"/>
    </location>
    <ligand>
        <name>IMP</name>
        <dbReference type="ChEBI" id="CHEBI:58053"/>
        <note>ligand shared between dimeric partners</note>
    </ligand>
</feature>
<feature type="binding site" evidence="1">
    <location>
        <begin position="299"/>
        <end position="305"/>
    </location>
    <ligand>
        <name>substrate</name>
    </ligand>
</feature>
<feature type="binding site" description="in other chain" evidence="1">
    <location>
        <position position="303"/>
    </location>
    <ligand>
        <name>IMP</name>
        <dbReference type="ChEBI" id="CHEBI:58053"/>
        <note>ligand shared between dimeric partners</note>
    </ligand>
</feature>
<feature type="binding site" evidence="1">
    <location>
        <position position="305"/>
    </location>
    <ligand>
        <name>GTP</name>
        <dbReference type="ChEBI" id="CHEBI:37565"/>
    </ligand>
</feature>
<feature type="binding site" evidence="1">
    <location>
        <begin position="331"/>
        <end position="333"/>
    </location>
    <ligand>
        <name>GTP</name>
        <dbReference type="ChEBI" id="CHEBI:37565"/>
    </ligand>
</feature>
<feature type="binding site" evidence="1">
    <location>
        <begin position="413"/>
        <end position="415"/>
    </location>
    <ligand>
        <name>GTP</name>
        <dbReference type="ChEBI" id="CHEBI:37565"/>
    </ligand>
</feature>
<accession>B1MIV1</accession>